<keyword id="KW-1185">Reference proteome</keyword>
<keyword id="KW-0687">Ribonucleoprotein</keyword>
<keyword id="KW-0689">Ribosomal protein</keyword>
<keyword id="KW-0694">RNA-binding</keyword>
<keyword id="KW-0699">rRNA-binding</keyword>
<name>RL22_ANAMF</name>
<proteinExistence type="inferred from homology"/>
<comment type="function">
    <text evidence="1">This protein binds specifically to 23S rRNA; its binding is stimulated by other ribosomal proteins, e.g. L4, L17, and L20. It is important during the early stages of 50S assembly. It makes multiple contacts with different domains of the 23S rRNA in the assembled 50S subunit and ribosome (By similarity).</text>
</comment>
<comment type="function">
    <text evidence="1">The globular domain of the protein is located near the polypeptide exit tunnel on the outside of the subunit, while an extended beta-hairpin is found that lines the wall of the exit tunnel in the center of the 70S ribosome.</text>
</comment>
<comment type="subunit">
    <text evidence="1">Part of the 50S ribosomal subunit.</text>
</comment>
<comment type="similarity">
    <text evidence="1">Belongs to the universal ribosomal protein uL22 family.</text>
</comment>
<reference key="1">
    <citation type="journal article" date="2009" name="BMC Genomics">
        <title>Conservation in the face of diversity: multistrain analysis of an intracellular bacterium.</title>
        <authorList>
            <person name="Dark M.J."/>
            <person name="Herndon D.R."/>
            <person name="Kappmeyer L.S."/>
            <person name="Gonzales M.P."/>
            <person name="Nordeen E."/>
            <person name="Palmer G.H."/>
            <person name="Knowles D.P. Jr."/>
            <person name="Brayton K.A."/>
        </authorList>
    </citation>
    <scope>NUCLEOTIDE SEQUENCE [LARGE SCALE GENOMIC DNA]</scope>
    <source>
        <strain>Florida</strain>
    </source>
</reference>
<sequence length="112" mass="12555">MTTVISARVSGLRSTPSKLNLVADLIRGQDVSTAVMYLKFCRKKAAFLVGKVLKSAVANARANYDVDLDSLYVKEVLVGKSFTLRRVRPRARGRACRIRKRYGSVVIRLLKR</sequence>
<gene>
    <name evidence="1" type="primary">rplV</name>
    <name type="ordered locus">AMF_691</name>
</gene>
<dbReference type="EMBL" id="CP001079">
    <property type="protein sequence ID" value="ACM49527.1"/>
    <property type="molecule type" value="Genomic_DNA"/>
</dbReference>
<dbReference type="RefSeq" id="WP_010265295.1">
    <property type="nucleotide sequence ID" value="NZ_AFMS01000137.1"/>
</dbReference>
<dbReference type="SMR" id="B9KJ65"/>
<dbReference type="STRING" id="320483.AMF_691"/>
<dbReference type="GeneID" id="7397873"/>
<dbReference type="KEGG" id="amf:AMF_691"/>
<dbReference type="eggNOG" id="COG0091">
    <property type="taxonomic scope" value="Bacteria"/>
</dbReference>
<dbReference type="HOGENOM" id="CLU_083987_3_0_5"/>
<dbReference type="Proteomes" id="UP000007307">
    <property type="component" value="Chromosome"/>
</dbReference>
<dbReference type="GO" id="GO:0022625">
    <property type="term" value="C:cytosolic large ribosomal subunit"/>
    <property type="evidence" value="ECO:0007669"/>
    <property type="project" value="TreeGrafter"/>
</dbReference>
<dbReference type="GO" id="GO:0019843">
    <property type="term" value="F:rRNA binding"/>
    <property type="evidence" value="ECO:0007669"/>
    <property type="project" value="UniProtKB-UniRule"/>
</dbReference>
<dbReference type="GO" id="GO:0003735">
    <property type="term" value="F:structural constituent of ribosome"/>
    <property type="evidence" value="ECO:0007669"/>
    <property type="project" value="InterPro"/>
</dbReference>
<dbReference type="GO" id="GO:0006412">
    <property type="term" value="P:translation"/>
    <property type="evidence" value="ECO:0007669"/>
    <property type="project" value="UniProtKB-UniRule"/>
</dbReference>
<dbReference type="CDD" id="cd00336">
    <property type="entry name" value="Ribosomal_L22"/>
    <property type="match status" value="1"/>
</dbReference>
<dbReference type="Gene3D" id="3.90.470.10">
    <property type="entry name" value="Ribosomal protein L22/L17"/>
    <property type="match status" value="1"/>
</dbReference>
<dbReference type="HAMAP" id="MF_01331_B">
    <property type="entry name" value="Ribosomal_uL22_B"/>
    <property type="match status" value="1"/>
</dbReference>
<dbReference type="InterPro" id="IPR001063">
    <property type="entry name" value="Ribosomal_uL22"/>
</dbReference>
<dbReference type="InterPro" id="IPR005727">
    <property type="entry name" value="Ribosomal_uL22_bac/chlpt-type"/>
</dbReference>
<dbReference type="InterPro" id="IPR047867">
    <property type="entry name" value="Ribosomal_uL22_bac/org-type"/>
</dbReference>
<dbReference type="InterPro" id="IPR036394">
    <property type="entry name" value="Ribosomal_uL22_sf"/>
</dbReference>
<dbReference type="NCBIfam" id="TIGR01044">
    <property type="entry name" value="rplV_bact"/>
    <property type="match status" value="1"/>
</dbReference>
<dbReference type="PANTHER" id="PTHR13501">
    <property type="entry name" value="CHLOROPLAST 50S RIBOSOMAL PROTEIN L22-RELATED"/>
    <property type="match status" value="1"/>
</dbReference>
<dbReference type="PANTHER" id="PTHR13501:SF8">
    <property type="entry name" value="LARGE RIBOSOMAL SUBUNIT PROTEIN UL22M"/>
    <property type="match status" value="1"/>
</dbReference>
<dbReference type="Pfam" id="PF00237">
    <property type="entry name" value="Ribosomal_L22"/>
    <property type="match status" value="1"/>
</dbReference>
<dbReference type="SUPFAM" id="SSF54843">
    <property type="entry name" value="Ribosomal protein L22"/>
    <property type="match status" value="1"/>
</dbReference>
<organism>
    <name type="scientific">Anaplasma marginale (strain Florida)</name>
    <dbReference type="NCBI Taxonomy" id="320483"/>
    <lineage>
        <taxon>Bacteria</taxon>
        <taxon>Pseudomonadati</taxon>
        <taxon>Pseudomonadota</taxon>
        <taxon>Alphaproteobacteria</taxon>
        <taxon>Rickettsiales</taxon>
        <taxon>Anaplasmataceae</taxon>
        <taxon>Anaplasma</taxon>
    </lineage>
</organism>
<protein>
    <recommendedName>
        <fullName evidence="1">Large ribosomal subunit protein uL22</fullName>
    </recommendedName>
    <alternativeName>
        <fullName evidence="2">50S ribosomal protein L22</fullName>
    </alternativeName>
</protein>
<evidence type="ECO:0000255" key="1">
    <source>
        <dbReference type="HAMAP-Rule" id="MF_01331"/>
    </source>
</evidence>
<evidence type="ECO:0000305" key="2"/>
<feature type="chain" id="PRO_1000166039" description="Large ribosomal subunit protein uL22">
    <location>
        <begin position="1"/>
        <end position="112"/>
    </location>
</feature>
<accession>B9KJ65</accession>